<sequence length="1296" mass="149411">MPFVNKQFNYKDPVNGVDIAYIKIPNAGQMQPVKAFKIHNKIWVIPERDTFTNPEEGDLNPPPEAKQVPVSYYDSTYLSTDNEKDNYLKGVTKLFERIYSTDLGRMLLTSIVRGIPFWGGSTIDTELKVIDTNCINVIQPDGSYRSEELNLVIIGPSADIIQFECKSFGHDVLNLTRNGYGSTQYIRFSPDFTFGFEESLEVDTNPLLGAGKFATDPAVTLAHELIHAEHRLYGIAINPNRVFKVNTNAYYEMSGLEVSFEELRTFGGHDAKFIDSLQENEFRLYYYNKFKDVASTLNKAKSIIGTTASLQYMKNVFKEKYLLSEDTSGKFSVDKLKFDKLYKMLTEIYTEDNFVNFFKVINRKTYLNFDKAVFRINIVPDENYTIKDGFNLKGANLSTNFNGQNTEINSRNFTRLKNFTGLFEFYKLLCVRGIIPFKTKSLDEGYNKALNDLCIKVNNWDLFFSPSEDNFTNDLDKVEEITADTNIEAAEENISLDLIQQYYLTFDFDNEPENISIENLSSDIIGQLEPMPNIERFPNGKKYELDKYTMFHYLRAQEFEHGDSRIILTNSAEEALLKPNVAYTFFSSKYVKKINKAVEAFMFLNWAEELVYDFTDETNEVTTMDKIADITIIVPYIGPALNIGNMLSKGEFVEAIIFTGVVAMLEFIPEYALPVFGTFAIVSYIANKVLTVQTINNALSKRNEKWDEVYKYTVTNWLAKVNTQIDLIREKMKKALENQAEATKAIINYQYNQYTEEEKNNINFNIDDLSSKLNESINSAMININKFLDQCSVSYLMNSMIPYAVKRLKDFDASVRDVLLKYIYDNRGTLVLQVDRLKDEVNNTLSADIPFQLSKYVDNKKLLSTFTEYIKNIVNTSILSIVYKKDDLIDLSRYGAKINIGDRVYYDSIDKNQIKLINLESSTIEVILKNAIVYNSMYENFSTSFWIKIPKYFSKINLNNEYTIINCIENNSGWKVSLNYGEIIWTLQDNKQNIQRVVFKYSQMVNISDYINRWIFVTITNNRLTKSKIYINGRLIDQKPISNLGNIHASNKIMFKLDGCRDPRRYIMIKYFNLFDKELNEKEIKDLYDSQSNSGILKDFWGNYLQYDKPYYMLNLFDPNKYVDVNNIGIRGYMYLKGPRGSVVTTNIYLNSTLYEGTKFIIKKYASGNEDNIVRNNDRVYINVVVKNKEYRLATNASQAGVEKILSALEIPDVGNLSQVVVMKSKDDQGIRNKCKMNLQDNNGNDIGFIGFHLYDNIAKLVASNWYNRQVGKASRTFGCSWEFIPVDDGWGESSL</sequence>
<feature type="initiator methionine" description="Removed" evidence="1">
    <location>
        <position position="1"/>
    </location>
</feature>
<feature type="chain" id="PRO_0000444918" description="Botulinum neurotoxin type A2">
    <location>
        <begin position="2"/>
        <end position="1296"/>
    </location>
</feature>
<feature type="chain" id="PRO_0000029213" description="Botulinum neurotoxin A2 light chain">
    <location>
        <begin position="2"/>
        <end position="448"/>
    </location>
</feature>
<feature type="chain" id="PRO_0000029214" description="Botulinum neurotoxin A2 heavy chain">
    <location>
        <begin position="449"/>
        <end position="1296"/>
    </location>
</feature>
<feature type="transmembrane region" description="Helical" evidence="3">
    <location>
        <begin position="627"/>
        <end position="647"/>
    </location>
</feature>
<feature type="transmembrane region" description="Helical" evidence="3">
    <location>
        <begin position="656"/>
        <end position="676"/>
    </location>
</feature>
<feature type="region of interest" description="Translocation domain (TD)" evidence="1">
    <location>
        <begin position="449"/>
        <end position="870"/>
    </location>
</feature>
<feature type="region of interest" description="Belt; not required for channel formation" evidence="1">
    <location>
        <begin position="492"/>
        <end position="545"/>
    </location>
</feature>
<feature type="region of interest" description="N-terminus of receptor binding domain (N-RBD)" evidence="1 18">
    <location>
        <begin position="871"/>
        <end position="1092"/>
    </location>
</feature>
<feature type="region of interest" description="C-terminus of receptor binding domain (C-RBD)" evidence="1 18">
    <location>
        <begin position="1093"/>
        <end position="1296"/>
    </location>
</feature>
<feature type="short sequence motif" description="Host ganglioside-binding motif" evidence="1">
    <location>
        <begin position="1264"/>
        <end position="1267"/>
    </location>
</feature>
<feature type="active site" evidence="4">
    <location>
        <position position="224"/>
    </location>
</feature>
<feature type="binding site" evidence="6 8 23 24">
    <location>
        <position position="223"/>
    </location>
    <ligand>
        <name>Zn(2+)</name>
        <dbReference type="ChEBI" id="CHEBI:29105"/>
        <note>catalytic</note>
    </ligand>
</feature>
<feature type="binding site" evidence="6 8 23 24">
    <location>
        <position position="227"/>
    </location>
    <ligand>
        <name>Zn(2+)</name>
        <dbReference type="ChEBI" id="CHEBI:29105"/>
        <note>catalytic</note>
    </ligand>
</feature>
<feature type="binding site" evidence="6 8 23 24">
    <location>
        <position position="262"/>
    </location>
    <ligand>
        <name>Zn(2+)</name>
        <dbReference type="ChEBI" id="CHEBI:29105"/>
        <note>catalytic</note>
    </ligand>
</feature>
<feature type="site" description="Transition state stabilizer" evidence="17">
    <location>
        <position position="366"/>
    </location>
</feature>
<feature type="disulfide bond" description="Interchain (between light and heavy chains)" evidence="2">
    <location>
        <begin position="430"/>
        <end position="454"/>
    </location>
</feature>
<feature type="disulfide bond" evidence="10 25">
    <location>
        <begin position="1235"/>
        <end position="1280"/>
    </location>
</feature>
<feature type="mutagenesis site" description="600-fold decrease in cleavage rate of SNAP25 by light chain." evidence="8">
    <original>D</original>
    <variation>A</variation>
    <location>
        <position position="370"/>
    </location>
</feature>
<feature type="mutagenesis site" description="Decreased binding to human SV2C extracellular loop 4 fragment." evidence="12">
    <original>E</original>
    <variation>R</variation>
    <location>
        <position position="1156"/>
    </location>
</feature>
<feature type="strand" evidence="27">
    <location>
        <begin position="16"/>
        <end position="23"/>
    </location>
</feature>
<feature type="strand" evidence="27">
    <location>
        <begin position="33"/>
        <end position="39"/>
    </location>
</feature>
<feature type="strand" evidence="27">
    <location>
        <begin position="42"/>
        <end position="48"/>
    </location>
</feature>
<feature type="strand" evidence="28">
    <location>
        <begin position="51"/>
        <end position="53"/>
    </location>
</feature>
<feature type="helix" evidence="29">
    <location>
        <begin position="54"/>
        <end position="56"/>
    </location>
</feature>
<feature type="turn" evidence="27">
    <location>
        <begin position="75"/>
        <end position="78"/>
    </location>
</feature>
<feature type="helix" evidence="27">
    <location>
        <begin position="81"/>
        <end position="99"/>
    </location>
</feature>
<feature type="helix" evidence="27">
    <location>
        <begin position="102"/>
        <end position="113"/>
    </location>
</feature>
<feature type="strand" evidence="27">
    <location>
        <begin position="126"/>
        <end position="128"/>
    </location>
</feature>
<feature type="strand" evidence="27">
    <location>
        <begin position="133"/>
        <end position="138"/>
    </location>
</feature>
<feature type="strand" evidence="27">
    <location>
        <begin position="144"/>
        <end position="148"/>
    </location>
</feature>
<feature type="strand" evidence="27">
    <location>
        <begin position="150"/>
        <end position="155"/>
    </location>
</feature>
<feature type="strand" evidence="27">
    <location>
        <begin position="164"/>
        <end position="166"/>
    </location>
</feature>
<feature type="turn" evidence="27">
    <location>
        <begin position="175"/>
        <end position="177"/>
    </location>
</feature>
<feature type="strand" evidence="27">
    <location>
        <begin position="184"/>
        <end position="187"/>
    </location>
</feature>
<feature type="strand" evidence="27">
    <location>
        <begin position="192"/>
        <end position="198"/>
    </location>
</feature>
<feature type="helix" evidence="28">
    <location>
        <begin position="200"/>
        <end position="203"/>
    </location>
</feature>
<feature type="strand" evidence="27">
    <location>
        <begin position="211"/>
        <end position="214"/>
    </location>
</feature>
<feature type="helix" evidence="27">
    <location>
        <begin position="217"/>
        <end position="232"/>
    </location>
</feature>
<feature type="strand" evidence="27">
    <location>
        <begin position="242"/>
        <end position="246"/>
    </location>
</feature>
<feature type="strand" evidence="27">
    <location>
        <begin position="254"/>
        <end position="259"/>
    </location>
</feature>
<feature type="helix" evidence="27">
    <location>
        <begin position="260"/>
        <end position="266"/>
    </location>
</feature>
<feature type="helix" evidence="27">
    <location>
        <begin position="268"/>
        <end position="273"/>
    </location>
</feature>
<feature type="helix" evidence="27">
    <location>
        <begin position="276"/>
        <end position="299"/>
    </location>
</feature>
<feature type="strand" evidence="27">
    <location>
        <begin position="305"/>
        <end position="308"/>
    </location>
</feature>
<feature type="helix" evidence="27">
    <location>
        <begin position="310"/>
        <end position="321"/>
    </location>
</feature>
<feature type="helix" evidence="27">
    <location>
        <begin position="335"/>
        <end position="347"/>
    </location>
</feature>
<feature type="helix" evidence="27">
    <location>
        <begin position="351"/>
        <end position="358"/>
    </location>
</feature>
<feature type="strand" evidence="27">
    <location>
        <begin position="364"/>
        <end position="366"/>
    </location>
</feature>
<feature type="strand" evidence="27">
    <location>
        <begin position="373"/>
        <end position="375"/>
    </location>
</feature>
<feature type="turn" evidence="27">
    <location>
        <begin position="381"/>
        <end position="383"/>
    </location>
</feature>
<feature type="turn" evidence="27">
    <location>
        <begin position="386"/>
        <end position="388"/>
    </location>
</feature>
<feature type="strand" evidence="28">
    <location>
        <begin position="393"/>
        <end position="395"/>
    </location>
</feature>
<feature type="helix" evidence="29">
    <location>
        <begin position="396"/>
        <end position="398"/>
    </location>
</feature>
<feature type="helix" evidence="27">
    <location>
        <begin position="402"/>
        <end position="404"/>
    </location>
</feature>
<feature type="turn" evidence="27">
    <location>
        <begin position="406"/>
        <end position="409"/>
    </location>
</feature>
<feature type="helix" evidence="27">
    <location>
        <begin position="410"/>
        <end position="412"/>
    </location>
</feature>
<feature type="strand" evidence="28">
    <location>
        <begin position="414"/>
        <end position="418"/>
    </location>
</feature>
<feature type="strand" evidence="31">
    <location>
        <begin position="877"/>
        <end position="883"/>
    </location>
</feature>
<feature type="strand" evidence="31">
    <location>
        <begin position="885"/>
        <end position="890"/>
    </location>
</feature>
<feature type="strand" evidence="31">
    <location>
        <begin position="897"/>
        <end position="900"/>
    </location>
</feature>
<feature type="strand" evidence="31">
    <location>
        <begin position="904"/>
        <end position="906"/>
    </location>
</feature>
<feature type="strand" evidence="30">
    <location>
        <begin position="908"/>
        <end position="910"/>
    </location>
</feature>
<feature type="strand" evidence="31">
    <location>
        <begin position="914"/>
        <end position="919"/>
    </location>
</feature>
<feature type="strand" evidence="31">
    <location>
        <begin position="924"/>
        <end position="927"/>
    </location>
</feature>
<feature type="helix" evidence="31">
    <location>
        <begin position="930"/>
        <end position="932"/>
    </location>
</feature>
<feature type="strand" evidence="31">
    <location>
        <begin position="935"/>
        <end position="938"/>
    </location>
</feature>
<feature type="strand" evidence="31">
    <location>
        <begin position="941"/>
        <end position="948"/>
    </location>
</feature>
<feature type="helix" evidence="31">
    <location>
        <begin position="955"/>
        <end position="957"/>
    </location>
</feature>
<feature type="strand" evidence="31">
    <location>
        <begin position="962"/>
        <end position="969"/>
    </location>
</feature>
<feature type="strand" evidence="31">
    <location>
        <begin position="972"/>
        <end position="979"/>
    </location>
</feature>
<feature type="strand" evidence="31">
    <location>
        <begin position="982"/>
        <end position="988"/>
    </location>
</feature>
<feature type="strand" evidence="31">
    <location>
        <begin position="994"/>
        <end position="1000"/>
    </location>
</feature>
<feature type="strand" evidence="31">
    <location>
        <begin position="1005"/>
        <end position="1007"/>
    </location>
</feature>
<feature type="strand" evidence="31">
    <location>
        <begin position="1015"/>
        <end position="1021"/>
    </location>
</feature>
<feature type="strand" evidence="31">
    <location>
        <begin position="1025"/>
        <end position="1031"/>
    </location>
</feature>
<feature type="strand" evidence="31">
    <location>
        <begin position="1034"/>
        <end position="1040"/>
    </location>
</feature>
<feature type="strand" evidence="31">
    <location>
        <begin position="1051"/>
        <end position="1059"/>
    </location>
</feature>
<feature type="strand" evidence="31">
    <location>
        <begin position="1066"/>
        <end position="1077"/>
    </location>
</feature>
<feature type="helix" evidence="31">
    <location>
        <begin position="1081"/>
        <end position="1091"/>
    </location>
</feature>
<feature type="strand" evidence="31">
    <location>
        <begin position="1102"/>
        <end position="1104"/>
    </location>
</feature>
<feature type="strand" evidence="31">
    <location>
        <begin position="1111"/>
        <end position="1117"/>
    </location>
</feature>
<feature type="strand" evidence="31">
    <location>
        <begin position="1122"/>
        <end position="1129"/>
    </location>
</feature>
<feature type="strand" evidence="31">
    <location>
        <begin position="1134"/>
        <end position="1137"/>
    </location>
</feature>
<feature type="strand" evidence="31">
    <location>
        <begin position="1142"/>
        <end position="1145"/>
    </location>
</feature>
<feature type="turn" evidence="31">
    <location>
        <begin position="1146"/>
        <end position="1148"/>
    </location>
</feature>
<feature type="strand" evidence="31">
    <location>
        <begin position="1149"/>
        <end position="1152"/>
    </location>
</feature>
<feature type="strand" evidence="31">
    <location>
        <begin position="1160"/>
        <end position="1164"/>
    </location>
</feature>
<feature type="strand" evidence="31">
    <location>
        <begin position="1171"/>
        <end position="1173"/>
    </location>
</feature>
<feature type="strand" evidence="31">
    <location>
        <begin position="1179"/>
        <end position="1186"/>
    </location>
</feature>
<feature type="strand" evidence="31">
    <location>
        <begin position="1189"/>
        <end position="1195"/>
    </location>
</feature>
<feature type="strand" evidence="31">
    <location>
        <begin position="1199"/>
        <end position="1205"/>
    </location>
</feature>
<feature type="strand" evidence="31">
    <location>
        <begin position="1207"/>
        <end position="1209"/>
    </location>
</feature>
<feature type="helix" evidence="31">
    <location>
        <begin position="1211"/>
        <end position="1213"/>
    </location>
</feature>
<feature type="strand" evidence="31">
    <location>
        <begin position="1220"/>
        <end position="1226"/>
    </location>
</feature>
<feature type="strand" evidence="31">
    <location>
        <begin position="1232"/>
        <end position="1240"/>
    </location>
</feature>
<feature type="strand" evidence="31">
    <location>
        <begin position="1246"/>
        <end position="1255"/>
    </location>
</feature>
<feature type="strand" evidence="31">
    <location>
        <begin position="1258"/>
        <end position="1264"/>
    </location>
</feature>
<feature type="helix" evidence="31">
    <location>
        <begin position="1265"/>
        <end position="1272"/>
    </location>
</feature>
<feature type="strand" evidence="31">
    <location>
        <begin position="1282"/>
        <end position="1285"/>
    </location>
</feature>
<feature type="turn" evidence="31">
    <location>
        <begin position="1289"/>
        <end position="1291"/>
    </location>
</feature>
<protein>
    <recommendedName>
        <fullName>Botulinum neurotoxin type A2</fullName>
        <shortName>BoNT/A</shortName>
        <shortName>BoNTA2</shortName>
    </recommendedName>
    <alternativeName>
        <fullName evidence="15">Bontoxilysin-A</fullName>
        <shortName>BOTOX</shortName>
    </alternativeName>
    <component>
        <recommendedName>
            <fullName>Botulinum neurotoxin A2 light chain</fullName>
            <shortName>LC</shortName>
            <ecNumber evidence="8">3.4.24.69</ecNumber>
        </recommendedName>
    </component>
    <component>
        <recommendedName>
            <fullName>Botulinum neurotoxin A2 heavy chain</fullName>
            <shortName>HC</shortName>
        </recommendedName>
    </component>
</protein>
<accession>Q45894</accession>
<accession>C1FUH9</accession>
<accession>P77780</accession>
<gene>
    <name evidence="15" type="primary">botA</name>
    <name type="synonym">atx</name>
    <name type="synonym">bna</name>
    <name evidence="14" type="synonym">bonT</name>
    <name evidence="13" type="synonym">bont/a2</name>
    <name evidence="19" type="ordered locus">CLM_0897</name>
</gene>
<evidence type="ECO:0000250" key="1">
    <source>
        <dbReference type="UniProtKB" id="P0DPI0"/>
    </source>
</evidence>
<evidence type="ECO:0000250" key="2">
    <source>
        <dbReference type="UniProtKB" id="P10844"/>
    </source>
</evidence>
<evidence type="ECO:0000255" key="3"/>
<evidence type="ECO:0000255" key="4">
    <source>
        <dbReference type="PROSITE-ProRule" id="PRU10095"/>
    </source>
</evidence>
<evidence type="ECO:0000269" key="5">
    <source>
    </source>
</evidence>
<evidence type="ECO:0000269" key="6">
    <source>
    </source>
</evidence>
<evidence type="ECO:0000269" key="7">
    <source>
    </source>
</evidence>
<evidence type="ECO:0000269" key="8">
    <source>
    </source>
</evidence>
<evidence type="ECO:0000269" key="9">
    <source>
    </source>
</evidence>
<evidence type="ECO:0000269" key="10">
    <source>
    </source>
</evidence>
<evidence type="ECO:0000269" key="11">
    <source>
    </source>
</evidence>
<evidence type="ECO:0000269" key="12">
    <source>
    </source>
</evidence>
<evidence type="ECO:0000303" key="13">
    <source>
    </source>
</evidence>
<evidence type="ECO:0000303" key="14">
    <source>
    </source>
</evidence>
<evidence type="ECO:0000303" key="15">
    <source ref="2"/>
</evidence>
<evidence type="ECO:0000305" key="16"/>
<evidence type="ECO:0000305" key="17">
    <source>
    </source>
</evidence>
<evidence type="ECO:0000305" key="18">
    <source>
    </source>
</evidence>
<evidence type="ECO:0000312" key="19">
    <source>
        <dbReference type="EMBL" id="ACO83782.1"/>
    </source>
</evidence>
<evidence type="ECO:0007744" key="20">
    <source>
        <dbReference type="PDB" id="1E1H"/>
    </source>
</evidence>
<evidence type="ECO:0007744" key="21">
    <source>
        <dbReference type="PDB" id="2G7K"/>
    </source>
</evidence>
<evidence type="ECO:0007744" key="22">
    <source>
        <dbReference type="PDB" id="2G7N"/>
    </source>
</evidence>
<evidence type="ECO:0007744" key="23">
    <source>
        <dbReference type="PDB" id="2G7P"/>
    </source>
</evidence>
<evidence type="ECO:0007744" key="24">
    <source>
        <dbReference type="PDB" id="2G7Q"/>
    </source>
</evidence>
<evidence type="ECO:0007744" key="25">
    <source>
        <dbReference type="PDB" id="5MOY"/>
    </source>
</evidence>
<evidence type="ECO:0007744" key="26">
    <source>
        <dbReference type="PDB" id="6ES1"/>
    </source>
</evidence>
<evidence type="ECO:0007829" key="27">
    <source>
        <dbReference type="PDB" id="1E1H"/>
    </source>
</evidence>
<evidence type="ECO:0007829" key="28">
    <source>
        <dbReference type="PDB" id="2G7N"/>
    </source>
</evidence>
<evidence type="ECO:0007829" key="29">
    <source>
        <dbReference type="PDB" id="2G7P"/>
    </source>
</evidence>
<evidence type="ECO:0007829" key="30">
    <source>
        <dbReference type="PDB" id="5MOY"/>
    </source>
</evidence>
<evidence type="ECO:0007829" key="31">
    <source>
        <dbReference type="PDB" id="6ES1"/>
    </source>
</evidence>
<reference key="1">
    <citation type="journal article" date="1993" name="Res. Microbiol.">
        <title>Sequence of the gene coding for the neurotoxin of Clostridium botulinum type A associated with infant botulism: comparison with other clostridial neurotoxins.</title>
        <authorList>
            <person name="Willems A."/>
            <person name="East A.K."/>
            <person name="Lawson P.A."/>
            <person name="Collins M.D."/>
        </authorList>
    </citation>
    <scope>NUCLEOTIDE SEQUENCE [GENOMIC DNA]</scope>
    <source>
        <strain>Kyoto / Type A2</strain>
    </source>
</reference>
<reference key="2">
    <citation type="submission" date="2008-10" db="EMBL/GenBank/DDBJ databases">
        <title>Genome sequence of Clostridium botulinum A2 Kyoto.</title>
        <authorList>
            <person name="Shrivastava S."/>
            <person name="Brinkac L.M."/>
            <person name="Brown J.L."/>
            <person name="Bruce D."/>
            <person name="Detter C.C."/>
            <person name="Johnson E.A."/>
            <person name="Munk C.A."/>
            <person name="Smith L.A."/>
            <person name="Smith T.J."/>
            <person name="Sutton G."/>
            <person name="Brettin T.S."/>
        </authorList>
    </citation>
    <scope>NUCLEOTIDE SEQUENCE [LARGE SCALE GENOMIC DNA]</scope>
    <source>
        <strain>Kyoto / Type A2</strain>
    </source>
</reference>
<reference key="3">
    <citation type="journal article" date="1996" name="Int. J. Syst. Bacteriol.">
        <title>Organization and phylogenetic interrelationships of genes encoding components of the botulinum toxin complex in proteolytic Clostridium botulinum types A, B, and F: evidence of chimeric sequences in the gene encoding the nontoxic nonhemagglutinin component.</title>
        <authorList>
            <person name="East A.K."/>
            <person name="Bhandari M."/>
            <person name="Stacey J.M."/>
            <person name="Campbell K.D."/>
            <person name="Collins M.D."/>
        </authorList>
    </citation>
    <scope>NUCLEOTIDE SEQUENCE [GENOMIC DNA] OF 1-66</scope>
    <source>
        <strain>Kyoto / Type A2</strain>
    </source>
</reference>
<reference key="4">
    <citation type="journal article" date="1992" name="J. Infect. Dis.">
        <title>Clinical and laboratory comparison of botulism from toxin types A, B, and E in the United States, 1975-1988.</title>
        <authorList>
            <person name="Woodruff B.A."/>
            <person name="Griffin P.M."/>
            <person name="McCroskey L.M."/>
            <person name="Smart J.F."/>
            <person name="Wainwright R.B."/>
            <person name="Bryant R.G."/>
            <person name="Hutwagner L.C."/>
            <person name="Hatheway C.L."/>
        </authorList>
    </citation>
    <scope>HOST RANGE</scope>
    <scope>EPIDEMIOLOGY</scope>
</reference>
<reference key="5">
    <citation type="journal article" date="2004" name="FEMS Microbiol. Lett.">
        <title>Nucleotide sequence and transcriptional analysis of the type A2 neurotoxin gene cluster in Clostridium botulinum.</title>
        <authorList>
            <person name="Dineen S.S."/>
            <person name="Bradshaw M."/>
            <person name="Karasek C.E."/>
            <person name="Johnson E.A."/>
        </authorList>
    </citation>
    <scope>INDUCTION</scope>
    <scope>OPERON STRUCTURE</scope>
    <source>
        <strain>Kyoto / Type A2</strain>
    </source>
</reference>
<reference key="6">
    <citation type="journal article" date="2010" name="Appl. Environ. Microbiol.">
        <title>Expression of the Clostridium botulinum A2 neurotoxin gene cluster proteins and characterization of the A2 complex.</title>
        <authorList>
            <person name="Lin G."/>
            <person name="Tepp W.H."/>
            <person name="Pier C.L."/>
            <person name="Jacobson M.J."/>
            <person name="Johnson E.A."/>
        </authorList>
    </citation>
    <scope>SUBUNIT</scope>
    <scope>INDUCTION</scope>
    <source>
        <strain>Kyoto / Type A2</strain>
    </source>
</reference>
<reference key="7">
    <citation type="journal article" date="2017" name="FEBS Lett.">
        <title>Crystal structures of OrfX2 and P47 from a Botulinum neurotoxin OrfX-type gene cluster.</title>
        <authorList>
            <person name="Gustafsson R."/>
            <person name="Berntsson R.P."/>
            <person name="Martinez-Carranza M."/>
            <person name="El Tekle G."/>
            <person name="Odegrip R."/>
            <person name="Johnson E.A."/>
            <person name="Stenmark P."/>
        </authorList>
    </citation>
    <scope>SUBUNIT</scope>
</reference>
<reference key="8">
    <citation type="journal article" date="2017" name="Pharmacol. Rev.">
        <title>Botulinum neurotoxins: Biology, pharmacology, and toxicology.</title>
        <authorList>
            <person name="Pirazzini M."/>
            <person name="Rossetto O."/>
            <person name="Eleopra R."/>
            <person name="Montecucco C."/>
        </authorList>
    </citation>
    <scope>REVIEW</scope>
</reference>
<reference evidence="20" key="9">
    <citation type="journal article" date="2004" name="Proc. Natl. Acad. Sci. U.S.A.">
        <title>Crystal structure of Clostridium botulinum neurotoxin protease in a product-bound state: Evidence for noncanonical zinc protease activity.</title>
        <authorList>
            <person name="Segelke B."/>
            <person name="Knapp M."/>
            <person name="Kadkhodayan S."/>
            <person name="Balhorn R."/>
            <person name="Rupp B."/>
        </authorList>
    </citation>
    <scope>X-RAY CRYSTALLOGRAPHY (1.80 ANGSTROMS) OF 5-250 AND 251-416 IN COMPLEX WITH ZINC</scope>
    <scope>COFACTOR</scope>
</reference>
<reference evidence="21 23 24" key="10">
    <citation type="journal article" date="2006" name="Biochemistry">
        <title>Light chain of botulinum neurotoxin serotype A: structural resolution of a catalytic intermediate.</title>
        <authorList>
            <person name="Fu Z."/>
            <person name="Chen S."/>
            <person name="Baldwin M.R."/>
            <person name="Boldt G.E."/>
            <person name="Crawford A."/>
            <person name="Janda K.D."/>
            <person name="Barbieri J.T."/>
            <person name="Kim J.J."/>
        </authorList>
    </citation>
    <scope>X-RAY CRYSTALLOGRAPHY (2.30 ANGSTROMS) OF 3-426 WITH AND WITHOUT ZINC</scope>
    <scope>FUNCTION (BOTULINUM NEUROTOXIN A2 LIGHT CHAIN)</scope>
    <scope>CATALYTIC ACTIVITY</scope>
    <scope>COFACTOR</scope>
    <scope>ACTIVITY REGULATION</scope>
    <scope>BIOPHYSICOCHEMICAL PROPERTIES</scope>
    <scope>SUBCELLULAR LOCATION (BOTULINUM NEUROTOXIN A2 LIGHT CHAIN)</scope>
    <scope>MUTAGENESIS OF ASP-370</scope>
</reference>
<reference evidence="22" key="11">
    <citation type="submission" date="2006-02" db="PDB data bank">
        <title>Structure of the light chain of botulinum neurotoxin serotype A bound to small molecule inhibitors.</title>
        <authorList>
            <person name="Fu Z."/>
            <person name="Baldwin M.R."/>
            <person name="Boldt G.E."/>
            <person name="Crawford A."/>
            <person name="Janda K.D."/>
            <person name="Barbieri J.T."/>
            <person name="Kim J.-J.P."/>
        </authorList>
    </citation>
    <scope>X-RAY CRYSTALLOGRAPHY (1.90 ANGSTROMS) OF 3-426</scope>
</reference>
<reference evidence="25" key="12">
    <citation type="journal article" date="2017" name="Sci. Rep.">
        <title>Crystal structure of the BoNT/A2 receptor-binding domain in complex with the luminal domain of its neuronal receptor SV2C.</title>
        <authorList>
            <person name="Benoit R.M."/>
            <person name="Scharer M.A."/>
            <person name="Wieser M.M."/>
            <person name="Li X."/>
            <person name="Frey D."/>
            <person name="Kammerer R.A."/>
        </authorList>
    </citation>
    <scope>X-RAY CRYSTALLOGRAPHY (2.30 ANGSTROMS) OF 871-1296 IN COMPLEX WITH SV2C RECEPTOR FRAGMENT</scope>
    <scope>FUNCTION (BOTULINUM NEUROTOXIN A2 HEAVY CHAIN)</scope>
    <scope>SUBUNIT</scope>
    <scope>DOMAIN</scope>
    <scope>DISULFIDE BONDS</scope>
    <source>
        <strain>Kyoto / Type A2</strain>
    </source>
</reference>
<reference evidence="26" key="13">
    <citation type="journal article" date="2018" name="Toxins">
        <title>Crystal structure of botulinum neurotoxin A2 in complex with the human protein receptor SV2C reveals plasticity in receptor binding.</title>
        <authorList>
            <person name="Gustafsson R."/>
            <person name="Zhang S."/>
            <person name="Masuyer G."/>
            <person name="Dong M."/>
            <person name="Stenmark P."/>
        </authorList>
    </citation>
    <scope>X-RAY CRYSTALLOGRAPHY (2.00 ANGSTROMS) OF 874-1296 IN COMPLEX WITH SV2C RECEPTOR FRAGMENT</scope>
    <scope>FUNCTION (BOTULINUM NEUROTOXIN A2 HEAVY CHAIN)</scope>
    <scope>SUBUNIT</scope>
    <scope>DOMAIN</scope>
    <scope>MUTAGENESIS OF GLU-1156</scope>
    <source>
        <strain>Kyoto / Type A2</strain>
    </source>
</reference>
<comment type="function">
    <molecule>Botulinum neurotoxin type A2</molecule>
    <text evidence="1">Botulinum toxin causes flaccid paralysis by inhibiting neurotransmitter (acetylcholine) release from the presynaptic membranes of nerve terminals of eukaryotic host skeletal and autonomic nervous system, with frequent heart or respiratory failure. Precursor of botulinum neurotoxin A2 which has 2 coreceptors; complex polysialylated gangliosides found on neural tissue and specific membrane-anchored proteins found in synaptic vesicles. Receptor proteins are exposed on host presynaptic cell membrane during neurotransmitter release, when the toxin heavy chain (HC) binds to them. Upon synaptic vesicle recycling the toxin is taken up via the endocytic pathway. When the pH of the toxin-containing endosome drops a structural rearrangement occurs so that the N-terminus of the HC forms pores that allows the light chain (LC) to translocate into the cytosol. Once in the cytosol the disulfide bond linking the 2 subunits is reduced and LC cleaves its target protein on synaptic vesicles, preventing their fusion with the cytoplasmic membrane and thus neurotransmitter release (By similarity).</text>
</comment>
<comment type="function">
    <molecule>Botulinum neurotoxin A2 light chain</molecule>
    <text evidence="17">Has proteolytic activity. After translocation into the eukaryotic host cytosol, LC hydrolyzes the 197-Gln-|-Arg-198 bond in SNAP25, blocking neurotransmitter release (PubMed:16846233).</text>
</comment>
<comment type="function">
    <molecule>Botulinum neurotoxin A2 heavy chain</molecule>
    <text evidence="1 10 12">Responsible for host epithelial cell transcytosis, host nerve cell targeting and translocation of light chain (LC) into host cytosol. Composed of 3 subdomains; the translocation domain (TD), and N-terminus and C-terminus of the receptor-binding domain (RBD). The RBD is responsible for the adherence of the toxin to the cell surface. It simultaneously recognizes 2 coreceptors; polysialated gangliosides and the receptor protein SV2 in close proximity on host synaptic vesicles (PubMed:28252640, PubMed:29649119). The N-terminus of the TD wraps an extended belt around the perimeter of the LC, protecting Zn(2+) in the active site; it may also prevent premature LC dissociation from the translocation channel and to protect toxin prior to translocation (By similarity). The TD inserts into synaptic vesicle membrane to allow translocation into the host cytosol (By similarity).</text>
</comment>
<comment type="catalytic activity">
    <reaction evidence="8">
        <text>Limited hydrolysis of proteins of the neuroexocytosis apparatus, synaptobrevins, SNAP25 or syntaxin. No detected action on small molecule substrates.</text>
        <dbReference type="EC" id="3.4.24.69"/>
    </reaction>
</comment>
<comment type="cofactor">
    <cofactor evidence="6 8">
        <name>Zn(2+)</name>
        <dbReference type="ChEBI" id="CHEBI:29105"/>
    </cofactor>
    <text evidence="6 8">Binds 1 zinc ion per subunit (PubMed:15107500, PubMed:16846233).</text>
</comment>
<comment type="activity regulation">
    <text evidence="8">Protease activity of LC inhibited by arginine hydroxamate.</text>
</comment>
<comment type="biophysicochemical properties">
    <kinetics>
        <KM evidence="8">14.1 uM for SNAP25 fragment (146-206) with isolated botulinum neurotoxin A2 light chain</KM>
        <text evidence="8">kcat is 0.13 sec(-1), for botulinum neurotoxin A2 light chain.</text>
    </kinetics>
</comment>
<comment type="subunit">
    <text evidence="9 10 11 12">Heterodimer; disulfide-linked heterodimer of a light chain (LC) and a heavy chain (HC). Interacts with host synaptic vesicle glycoprotein 2C (SV2C) which serves as a coreceptor (PubMed:28252640). Also binds host receptor proteins SV2A and SV2B; glycosylation of host protein greatly improves the interaction (PubMed:29649119). Part of a crude toxin extract that includes BoNTA2/NTNH, P47, OrfX2 and OrfX3; OrfX1 was not detected. A purified toxin complex has NTNH and dichain BoNTA2 (PubMed:19915042). Forms a highly interlocked heterodimer with NTNH at pH 6.0, called the minimally functional progenitor toxin complex (M-PTC) (PubMed:29067689).</text>
</comment>
<comment type="subcellular location">
    <molecule>Botulinum neurotoxin A2 light chain</molecule>
    <subcellularLocation>
        <location>Secreted</location>
    </subcellularLocation>
    <subcellularLocation>
        <location evidence="17">Host cytoplasm</location>
        <location evidence="17">Host cytosol</location>
    </subcellularLocation>
</comment>
<comment type="subcellular location">
    <molecule>Botulinum neurotoxin A2 heavy chain</molecule>
    <subcellularLocation>
        <location>Secreted</location>
    </subcellularLocation>
    <subcellularLocation>
        <location evidence="18">Host synapse</location>
        <location evidence="18">Host presynaptic cell membrane</location>
    </subcellularLocation>
    <subcellularLocation>
        <location evidence="1">Host cytoplasmic vesicle</location>
        <location evidence="1">Host secretory vesicle</location>
        <location evidence="1">Host synaptic vesicle membrane</location>
        <topology evidence="16">Multi-pass membrane protein</topology>
    </subcellularLocation>
</comment>
<comment type="induction">
    <text evidence="7 9">The toxin locus has divergently transcribed operons maximally expressed during early stationary phase. This is part of the p47-ntnh-botA operon; no botA-specific transcript was seen (PubMed:15158256). The crude toxin extract was isolated from cells that had been growing statically for 96 hours (at protein level) (PubMed:19915042).</text>
</comment>
<comment type="domain">
    <molecule>Botulinum neurotoxin A2 light chain</molecule>
    <text evidence="17">Has protease activity.</text>
</comment>
<comment type="domain">
    <molecule>Botulinum neurotoxin A2 heavy chain</molecule>
    <text evidence="1 10 12">Has 3 functional domains; the translocation domain (TD) and the receptor-binding domain (RBD) which is further subdivided into N- and C-terminal domains (N-RBD and C-RBD) (PubMed:28252640, PubMed:29649119). The N-terminus of the TD wraps an extended belt around the perimeter of the LC, protecting Zn(2+) in the active site and may be a pseudosubstrate inhibitor which serves as an intramolecular chaperone for the LC prior to its translocation into the host cytosol. The RBD binds transiently exposed coreceptors on the host presynaptic cell membrane (PubMed:28252640).</text>
</comment>
<comment type="miscellaneous">
    <text>There are seven antigenically distinct forms of botulinum neurotoxin: Types A, B, C, D, E, F, and G; new subtypes are quite frequent.</text>
</comment>
<comment type="miscellaneous">
    <text evidence="1">Botulism poisoning is usually food-borne, either by ingesting toxin or bacterial-contaminated food, or less frequently by inhalation poisoning. In both cases the neurotoxin binds to the apical surface of epithelial cells in the gut or airway. Toxin undergoes receptor-mediated endocytosis (using a different receptor than on target nerve cells), transcytosis across the epithelial cells and release into the general circulation. Once in the general circulation it binds to its target cells.</text>
</comment>
<comment type="miscellaneous">
    <text evidence="5">Types A, B and E are the most frequent cause of adult human foodborne botulism; type A is the most severe, while type E has the shortest incubation period (PubMed:1431246).</text>
</comment>
<comment type="similarity">
    <text evidence="16">Belongs to the peptidase M27 family.</text>
</comment>
<comment type="online information" name="BotDB - A Database Resource for Clostridial Neurotoxins">
    <link uri="https://botdb.abcc.ncifcrf.gov/"/>
</comment>
<organism>
    <name type="scientific">Clostridium botulinum (strain Kyoto / Type A2)</name>
    <dbReference type="NCBI Taxonomy" id="536232"/>
    <lineage>
        <taxon>Bacteria</taxon>
        <taxon>Bacillati</taxon>
        <taxon>Bacillota</taxon>
        <taxon>Clostridia</taxon>
        <taxon>Eubacteriales</taxon>
        <taxon>Clostridiaceae</taxon>
        <taxon>Clostridium</taxon>
    </lineage>
</organism>
<name>BXA2_CLOBJ</name>
<keyword id="KW-0002">3D-structure</keyword>
<keyword id="KW-1015">Disulfide bond</keyword>
<keyword id="KW-1032">Host cell membrane</keyword>
<keyword id="KW-1035">Host cytoplasm</keyword>
<keyword id="KW-1036">Host cytoplasmic vesicle</keyword>
<keyword id="KW-1043">Host membrane</keyword>
<keyword id="KW-1051">Host synapse</keyword>
<keyword id="KW-0378">Hydrolase</keyword>
<keyword id="KW-0472">Membrane</keyword>
<keyword id="KW-0479">Metal-binding</keyword>
<keyword id="KW-0482">Metalloprotease</keyword>
<keyword id="KW-0528">Neurotoxin</keyword>
<keyword id="KW-0645">Protease</keyword>
<keyword id="KW-0964">Secreted</keyword>
<keyword id="KW-0800">Toxin</keyword>
<keyword id="KW-0812">Transmembrane</keyword>
<keyword id="KW-1133">Transmembrane helix</keyword>
<keyword id="KW-0843">Virulence</keyword>
<keyword id="KW-0862">Zinc</keyword>
<dbReference type="EC" id="3.4.24.69" evidence="8"/>
<dbReference type="EMBL" id="X73423">
    <property type="protein sequence ID" value="CAA51824.1"/>
    <property type="molecule type" value="Genomic_DNA"/>
</dbReference>
<dbReference type="EMBL" id="CP001581">
    <property type="protein sequence ID" value="ACO83782.1"/>
    <property type="molecule type" value="Genomic_DNA"/>
</dbReference>
<dbReference type="EMBL" id="X87974">
    <property type="protein sequence ID" value="CAA61234.1"/>
    <property type="molecule type" value="Genomic_DNA"/>
</dbReference>
<dbReference type="PIR" id="I40645">
    <property type="entry name" value="I40645"/>
</dbReference>
<dbReference type="RefSeq" id="WP_012703873.1">
    <property type="nucleotide sequence ID" value="NC_012563.1"/>
</dbReference>
<dbReference type="PDB" id="1E1H">
    <property type="method" value="X-ray"/>
    <property type="resolution" value="1.80 A"/>
    <property type="chains" value="A/C=10-250, B/D=251-416"/>
</dbReference>
<dbReference type="PDB" id="2G7K">
    <property type="method" value="X-ray"/>
    <property type="resolution" value="2.80 A"/>
    <property type="chains" value="A/B=3-426"/>
</dbReference>
<dbReference type="PDB" id="2G7N">
    <property type="method" value="X-ray"/>
    <property type="resolution" value="1.90 A"/>
    <property type="chains" value="A=3-426"/>
</dbReference>
<dbReference type="PDB" id="2G7P">
    <property type="method" value="X-ray"/>
    <property type="resolution" value="2.30 A"/>
    <property type="chains" value="A/B=3-426"/>
</dbReference>
<dbReference type="PDB" id="2G7Q">
    <property type="method" value="X-ray"/>
    <property type="resolution" value="2.41 A"/>
    <property type="chains" value="A/B=3-426"/>
</dbReference>
<dbReference type="PDB" id="5MOY">
    <property type="method" value="X-ray"/>
    <property type="resolution" value="2.30 A"/>
    <property type="chains" value="A=871-1296"/>
</dbReference>
<dbReference type="PDB" id="6ES1">
    <property type="method" value="X-ray"/>
    <property type="resolution" value="2.00 A"/>
    <property type="chains" value="A=874-1296"/>
</dbReference>
<dbReference type="PDB" id="8JLC">
    <property type="method" value="EM"/>
    <property type="resolution" value="2.88 A"/>
    <property type="chains" value="B=871-1296"/>
</dbReference>
<dbReference type="PDB" id="8JLE">
    <property type="method" value="EM"/>
    <property type="resolution" value="2.82 A"/>
    <property type="chains" value="B=871-1296"/>
</dbReference>
<dbReference type="PDB" id="8JLF">
    <property type="method" value="EM"/>
    <property type="resolution" value="3.01 A"/>
    <property type="chains" value="B=871-1296"/>
</dbReference>
<dbReference type="PDB" id="8JLG">
    <property type="method" value="EM"/>
    <property type="resolution" value="2.87 A"/>
    <property type="chains" value="B=871-1296"/>
</dbReference>
<dbReference type="PDB" id="8JLH">
    <property type="method" value="EM"/>
    <property type="resolution" value="2.90 A"/>
    <property type="chains" value="B/D=871-1296"/>
</dbReference>
<dbReference type="PDB" id="8JS8">
    <property type="method" value="EM"/>
    <property type="resolution" value="2.88 A"/>
    <property type="chains" value="B=871-1296"/>
</dbReference>
<dbReference type="PDB" id="8JS9">
    <property type="method" value="EM"/>
    <property type="resolution" value="3.01 A"/>
    <property type="chains" value="B=871-1296"/>
</dbReference>
<dbReference type="PDB" id="8K77">
    <property type="method" value="EM"/>
    <property type="resolution" value="3.11 A"/>
    <property type="chains" value="B=871-1296"/>
</dbReference>
<dbReference type="PDBsum" id="1E1H"/>
<dbReference type="PDBsum" id="2G7K"/>
<dbReference type="PDBsum" id="2G7N"/>
<dbReference type="PDBsum" id="2G7P"/>
<dbReference type="PDBsum" id="2G7Q"/>
<dbReference type="PDBsum" id="5MOY"/>
<dbReference type="PDBsum" id="6ES1"/>
<dbReference type="PDBsum" id="8JLC"/>
<dbReference type="PDBsum" id="8JLE"/>
<dbReference type="PDBsum" id="8JLF"/>
<dbReference type="PDBsum" id="8JLG"/>
<dbReference type="PDBsum" id="8JLH"/>
<dbReference type="PDBsum" id="8JS8"/>
<dbReference type="PDBsum" id="8JS9"/>
<dbReference type="PDBsum" id="8K77"/>
<dbReference type="SMR" id="Q45894"/>
<dbReference type="DIP" id="DIP-437N"/>
<dbReference type="BindingDB" id="Q45894"/>
<dbReference type="Allergome" id="12104">
    <property type="allergen name" value="Clo bo Toxin"/>
</dbReference>
<dbReference type="KEGG" id="cby:CLM_0897"/>
<dbReference type="eggNOG" id="ENOG5032QRH">
    <property type="taxonomic scope" value="Bacteria"/>
</dbReference>
<dbReference type="HOGENOM" id="CLU_262205_0_0_9"/>
<dbReference type="EvolutionaryTrace" id="Q45894"/>
<dbReference type="Proteomes" id="UP000001374">
    <property type="component" value="Chromosome"/>
</dbReference>
<dbReference type="GO" id="GO:0005576">
    <property type="term" value="C:extracellular region"/>
    <property type="evidence" value="ECO:0007669"/>
    <property type="project" value="UniProtKB-SubCell"/>
</dbReference>
<dbReference type="GO" id="GO:0044161">
    <property type="term" value="C:host cell cytoplasmic vesicle"/>
    <property type="evidence" value="ECO:0007669"/>
    <property type="project" value="UniProtKB-SubCell"/>
</dbReference>
<dbReference type="GO" id="GO:0044164">
    <property type="term" value="C:host cell cytosol"/>
    <property type="evidence" value="ECO:0007669"/>
    <property type="project" value="UniProtKB-SubCell"/>
</dbReference>
<dbReference type="GO" id="GO:0020002">
    <property type="term" value="C:host cell plasma membrane"/>
    <property type="evidence" value="ECO:0007669"/>
    <property type="project" value="UniProtKB-KW"/>
</dbReference>
<dbReference type="GO" id="GO:0044231">
    <property type="term" value="C:host cell presynaptic membrane"/>
    <property type="evidence" value="ECO:0007669"/>
    <property type="project" value="UniProtKB-SubCell"/>
</dbReference>
<dbReference type="GO" id="GO:0016020">
    <property type="term" value="C:membrane"/>
    <property type="evidence" value="ECO:0007669"/>
    <property type="project" value="UniProtKB-KW"/>
</dbReference>
<dbReference type="GO" id="GO:0004222">
    <property type="term" value="F:metalloendopeptidase activity"/>
    <property type="evidence" value="ECO:0007669"/>
    <property type="project" value="UniProtKB-EC"/>
</dbReference>
<dbReference type="GO" id="GO:0008320">
    <property type="term" value="F:protein transmembrane transporter activity"/>
    <property type="evidence" value="ECO:0007669"/>
    <property type="project" value="InterPro"/>
</dbReference>
<dbReference type="GO" id="GO:0090729">
    <property type="term" value="F:toxin activity"/>
    <property type="evidence" value="ECO:0007669"/>
    <property type="project" value="UniProtKB-KW"/>
</dbReference>
<dbReference type="GO" id="GO:0008270">
    <property type="term" value="F:zinc ion binding"/>
    <property type="evidence" value="ECO:0007669"/>
    <property type="project" value="InterPro"/>
</dbReference>
<dbReference type="GO" id="GO:0006508">
    <property type="term" value="P:proteolysis"/>
    <property type="evidence" value="ECO:0007669"/>
    <property type="project" value="UniProtKB-KW"/>
</dbReference>
<dbReference type="CDD" id="cd23388">
    <property type="entry name" value="Toxin_R_bind_C_BoNTA_like"/>
    <property type="match status" value="1"/>
</dbReference>
<dbReference type="FunFam" id="2.60.120.200:FF:000184">
    <property type="entry name" value="Botulinum neurotoxin type A"/>
    <property type="match status" value="1"/>
</dbReference>
<dbReference type="FunFam" id="2.80.10.50:FF:000070">
    <property type="entry name" value="Botulinum neurotoxin type A"/>
    <property type="match status" value="1"/>
</dbReference>
<dbReference type="FunFam" id="3.90.1240.10:FF:000002">
    <property type="entry name" value="Botulinum neurotoxin type A"/>
    <property type="match status" value="1"/>
</dbReference>
<dbReference type="Gene3D" id="1.20.58.540">
    <property type="match status" value="1"/>
</dbReference>
<dbReference type="Gene3D" id="2.60.120.200">
    <property type="match status" value="1"/>
</dbReference>
<dbReference type="Gene3D" id="2.80.10.50">
    <property type="match status" value="1"/>
</dbReference>
<dbReference type="Gene3D" id="1.20.1120.10">
    <property type="entry name" value="Clostridium botulinum neurotoxin b, 'coiled-coil' domain"/>
    <property type="match status" value="1"/>
</dbReference>
<dbReference type="Gene3D" id="4.10.1280.10">
    <property type="entry name" value="Clostridium neurotoxins"/>
    <property type="match status" value="1"/>
</dbReference>
<dbReference type="Gene3D" id="3.90.1240.10">
    <property type="entry name" value="Metalloproteases ('zincins'), catalytic domain like"/>
    <property type="match status" value="1"/>
</dbReference>
<dbReference type="InterPro" id="IPR000395">
    <property type="entry name" value="Bot/tetX_LC"/>
</dbReference>
<dbReference type="InterPro" id="IPR036248">
    <property type="entry name" value="Clostridium_toxin_transloc"/>
</dbReference>
<dbReference type="InterPro" id="IPR013320">
    <property type="entry name" value="ConA-like_dom_sf"/>
</dbReference>
<dbReference type="InterPro" id="IPR011065">
    <property type="entry name" value="Kunitz_inhibitor_STI-like_sf"/>
</dbReference>
<dbReference type="InterPro" id="IPR013104">
    <property type="entry name" value="Toxin_rcpt-bd_C"/>
</dbReference>
<dbReference type="InterPro" id="IPR012928">
    <property type="entry name" value="Toxin_rcpt-bd_N"/>
</dbReference>
<dbReference type="InterPro" id="IPR012500">
    <property type="entry name" value="Toxin_trans"/>
</dbReference>
<dbReference type="Pfam" id="PF01742">
    <property type="entry name" value="Peptidase_M27"/>
    <property type="match status" value="1"/>
</dbReference>
<dbReference type="Pfam" id="PF07951">
    <property type="entry name" value="Toxin_R_bind_C"/>
    <property type="match status" value="1"/>
</dbReference>
<dbReference type="Pfam" id="PF07953">
    <property type="entry name" value="Toxin_R_bind_N"/>
    <property type="match status" value="1"/>
</dbReference>
<dbReference type="Pfam" id="PF07952">
    <property type="entry name" value="Toxin_trans"/>
    <property type="match status" value="1"/>
</dbReference>
<dbReference type="PRINTS" id="PR00760">
    <property type="entry name" value="BONTOXILYSIN"/>
</dbReference>
<dbReference type="SUPFAM" id="SSF58091">
    <property type="entry name" value="Clostridium neurotoxins, 'coiled-coil' domain"/>
    <property type="match status" value="1"/>
</dbReference>
<dbReference type="SUPFAM" id="SSF49899">
    <property type="entry name" value="Concanavalin A-like lectins/glucanases"/>
    <property type="match status" value="1"/>
</dbReference>
<dbReference type="SUPFAM" id="SSF55486">
    <property type="entry name" value="Metalloproteases ('zincins'), catalytic domain"/>
    <property type="match status" value="1"/>
</dbReference>
<dbReference type="SUPFAM" id="SSF50386">
    <property type="entry name" value="STI-like"/>
    <property type="match status" value="1"/>
</dbReference>
<proteinExistence type="evidence at protein level"/>